<protein>
    <recommendedName>
        <fullName evidence="1">Protein SprT</fullName>
    </recommendedName>
</protein>
<sequence length="166" mass="19596">MKTPRIPIAIQQAVMRSLREHLANANRKLERRYAEPTLVYQQRGTSAGTAWLEKNEIRLNPVLLLENQREFIDEVVPHELAHLLVWQHFGRVAPHGKEWKWMMESVLGVPARRTHRFELASVRQNTFPYRCRCQQHQLTVRRHNRVVRGEATYRCVRCGDLLVAEK</sequence>
<keyword id="KW-0963">Cytoplasm</keyword>
<keyword id="KW-0479">Metal-binding</keyword>
<keyword id="KW-0862">Zinc</keyword>
<proteinExistence type="inferred from homology"/>
<gene>
    <name evidence="1" type="primary">sprT</name>
    <name type="ordered locus">KPN78578_33130</name>
    <name type="ORF">KPN_03377</name>
</gene>
<dbReference type="EMBL" id="CP000647">
    <property type="protein sequence ID" value="ABR78774.1"/>
    <property type="molecule type" value="Genomic_DNA"/>
</dbReference>
<dbReference type="RefSeq" id="WP_002916588.1">
    <property type="nucleotide sequence ID" value="NC_009648.1"/>
</dbReference>
<dbReference type="STRING" id="272620.KPN_03377"/>
<dbReference type="PaxDb" id="272620-KPN_03377"/>
<dbReference type="EnsemblBacteria" id="ABR78774">
    <property type="protein sequence ID" value="ABR78774"/>
    <property type="gene ID" value="KPN_03377"/>
</dbReference>
<dbReference type="KEGG" id="kpn:KPN_03377"/>
<dbReference type="HOGENOM" id="CLU_113336_0_1_6"/>
<dbReference type="Proteomes" id="UP000000265">
    <property type="component" value="Chromosome"/>
</dbReference>
<dbReference type="GO" id="GO:0005737">
    <property type="term" value="C:cytoplasm"/>
    <property type="evidence" value="ECO:0007669"/>
    <property type="project" value="UniProtKB-SubCell"/>
</dbReference>
<dbReference type="GO" id="GO:0008270">
    <property type="term" value="F:zinc ion binding"/>
    <property type="evidence" value="ECO:0007669"/>
    <property type="project" value="UniProtKB-UniRule"/>
</dbReference>
<dbReference type="GO" id="GO:0006950">
    <property type="term" value="P:response to stress"/>
    <property type="evidence" value="ECO:0007669"/>
    <property type="project" value="UniProtKB-ARBA"/>
</dbReference>
<dbReference type="Gene3D" id="3.30.2010.10">
    <property type="entry name" value="Metalloproteases ('zincins'), catalytic domain"/>
    <property type="match status" value="1"/>
</dbReference>
<dbReference type="HAMAP" id="MF_00746">
    <property type="entry name" value="SprT"/>
    <property type="match status" value="1"/>
</dbReference>
<dbReference type="InterPro" id="IPR006640">
    <property type="entry name" value="SprT-like_domain"/>
</dbReference>
<dbReference type="InterPro" id="IPR035240">
    <property type="entry name" value="SprT_Zn_ribbon"/>
</dbReference>
<dbReference type="InterPro" id="IPR023483">
    <property type="entry name" value="Uncharacterised_SprT"/>
</dbReference>
<dbReference type="NCBIfam" id="NF003421">
    <property type="entry name" value="PRK04860.1"/>
    <property type="match status" value="1"/>
</dbReference>
<dbReference type="PANTHER" id="PTHR38773">
    <property type="entry name" value="PROTEIN SPRT"/>
    <property type="match status" value="1"/>
</dbReference>
<dbReference type="PANTHER" id="PTHR38773:SF1">
    <property type="entry name" value="PROTEIN SPRT"/>
    <property type="match status" value="1"/>
</dbReference>
<dbReference type="Pfam" id="PF10263">
    <property type="entry name" value="SprT-like"/>
    <property type="match status" value="1"/>
</dbReference>
<dbReference type="Pfam" id="PF17283">
    <property type="entry name" value="Zn_ribbon_SprT"/>
    <property type="match status" value="1"/>
</dbReference>
<dbReference type="SMART" id="SM00731">
    <property type="entry name" value="SprT"/>
    <property type="match status" value="1"/>
</dbReference>
<dbReference type="PROSITE" id="PS00142">
    <property type="entry name" value="ZINC_PROTEASE"/>
    <property type="match status" value="1"/>
</dbReference>
<comment type="cofactor">
    <cofactor evidence="1">
        <name>Zn(2+)</name>
        <dbReference type="ChEBI" id="CHEBI:29105"/>
    </cofactor>
    <text evidence="1">Binds 1 zinc ion.</text>
</comment>
<comment type="subcellular location">
    <subcellularLocation>
        <location evidence="1">Cytoplasm</location>
    </subcellularLocation>
</comment>
<comment type="similarity">
    <text evidence="1">Belongs to the SprT family.</text>
</comment>
<name>SPRT_KLEP7</name>
<organism>
    <name type="scientific">Klebsiella pneumoniae subsp. pneumoniae (strain ATCC 700721 / MGH 78578)</name>
    <dbReference type="NCBI Taxonomy" id="272620"/>
    <lineage>
        <taxon>Bacteria</taxon>
        <taxon>Pseudomonadati</taxon>
        <taxon>Pseudomonadota</taxon>
        <taxon>Gammaproteobacteria</taxon>
        <taxon>Enterobacterales</taxon>
        <taxon>Enterobacteriaceae</taxon>
        <taxon>Klebsiella/Raoultella group</taxon>
        <taxon>Klebsiella</taxon>
        <taxon>Klebsiella pneumoniae complex</taxon>
    </lineage>
</organism>
<feature type="chain" id="PRO_1000046529" description="Protein SprT">
    <location>
        <begin position="1"/>
        <end position="166"/>
    </location>
</feature>
<feature type="domain" description="SprT-like" evidence="1">
    <location>
        <begin position="20"/>
        <end position="164"/>
    </location>
</feature>
<feature type="active site" evidence="1">
    <location>
        <position position="79"/>
    </location>
</feature>
<feature type="binding site" evidence="1">
    <location>
        <position position="78"/>
    </location>
    <ligand>
        <name>Zn(2+)</name>
        <dbReference type="ChEBI" id="CHEBI:29105"/>
    </ligand>
</feature>
<feature type="binding site" evidence="1">
    <location>
        <position position="82"/>
    </location>
    <ligand>
        <name>Zn(2+)</name>
        <dbReference type="ChEBI" id="CHEBI:29105"/>
    </ligand>
</feature>
<evidence type="ECO:0000255" key="1">
    <source>
        <dbReference type="HAMAP-Rule" id="MF_00746"/>
    </source>
</evidence>
<accession>A6TDV3</accession>
<reference key="1">
    <citation type="submission" date="2006-09" db="EMBL/GenBank/DDBJ databases">
        <authorList>
            <consortium name="The Klebsiella pneumonia Genome Sequencing Project"/>
            <person name="McClelland M."/>
            <person name="Sanderson E.K."/>
            <person name="Spieth J."/>
            <person name="Clifton W.S."/>
            <person name="Latreille P."/>
            <person name="Sabo A."/>
            <person name="Pepin K."/>
            <person name="Bhonagiri V."/>
            <person name="Porwollik S."/>
            <person name="Ali J."/>
            <person name="Wilson R.K."/>
        </authorList>
    </citation>
    <scope>NUCLEOTIDE SEQUENCE [LARGE SCALE GENOMIC DNA]</scope>
    <source>
        <strain>ATCC 700721 / MGH 78578</strain>
    </source>
</reference>